<evidence type="ECO:0000250" key="1">
    <source>
        <dbReference type="UniProtKB" id="P62316"/>
    </source>
</evidence>
<evidence type="ECO:0000255" key="2">
    <source>
        <dbReference type="PROSITE-ProRule" id="PRU01346"/>
    </source>
</evidence>
<evidence type="ECO:0000305" key="3"/>
<reference key="1">
    <citation type="journal article" date="1998" name="Science">
        <title>Genome sequence of the nematode C. elegans: a platform for investigating biology.</title>
        <authorList>
            <consortium name="The C. elegans sequencing consortium"/>
        </authorList>
    </citation>
    <scope>NUCLEOTIDE SEQUENCE [LARGE SCALE GENOMIC DNA]</scope>
    <source>
        <strain>Bristol N2</strain>
    </source>
</reference>
<dbReference type="EMBL" id="Z78012">
    <property type="protein sequence ID" value="CAB01413.1"/>
    <property type="molecule type" value="Genomic_DNA"/>
</dbReference>
<dbReference type="PIR" id="T20151">
    <property type="entry name" value="T20151"/>
</dbReference>
<dbReference type="RefSeq" id="NP_506004.1">
    <property type="nucleotide sequence ID" value="NM_073603.9"/>
</dbReference>
<dbReference type="PDB" id="8RO0">
    <property type="method" value="EM"/>
    <property type="resolution" value="2.90 A"/>
    <property type="chains" value="d/k=1-118"/>
</dbReference>
<dbReference type="PDB" id="8RO1">
    <property type="method" value="EM"/>
    <property type="resolution" value="3.00 A"/>
    <property type="chains" value="d/k=1-118"/>
</dbReference>
<dbReference type="PDBsum" id="8RO0"/>
<dbReference type="PDBsum" id="8RO1"/>
<dbReference type="EMDB" id="EMD-19397"/>
<dbReference type="EMDB" id="EMD-19398"/>
<dbReference type="SMR" id="Q18786"/>
<dbReference type="BioGRID" id="44663">
    <property type="interactions" value="40"/>
</dbReference>
<dbReference type="DIP" id="DIP-27008N"/>
<dbReference type="FunCoup" id="Q18786">
    <property type="interactions" value="2608"/>
</dbReference>
<dbReference type="IntAct" id="Q18786">
    <property type="interactions" value="1"/>
</dbReference>
<dbReference type="STRING" id="6239.C52E4.3.2"/>
<dbReference type="PaxDb" id="6239-C52E4.3.1"/>
<dbReference type="PeptideAtlas" id="Q18786"/>
<dbReference type="EnsemblMetazoa" id="C52E4.3.1">
    <property type="protein sequence ID" value="C52E4.3.1"/>
    <property type="gene ID" value="WBGene00004917"/>
</dbReference>
<dbReference type="GeneID" id="179639"/>
<dbReference type="KEGG" id="cel:CELE_C52E4.3"/>
<dbReference type="UCSC" id="C52E4.3.2">
    <property type="organism name" value="c. elegans"/>
</dbReference>
<dbReference type="AGR" id="WB:WBGene00004917"/>
<dbReference type="CTD" id="179639"/>
<dbReference type="WormBase" id="C52E4.3">
    <property type="protein sequence ID" value="CE08945"/>
    <property type="gene ID" value="WBGene00004917"/>
    <property type="gene designation" value="snr-4"/>
</dbReference>
<dbReference type="eggNOG" id="KOG3459">
    <property type="taxonomic scope" value="Eukaryota"/>
</dbReference>
<dbReference type="GeneTree" id="ENSGT00390000017608"/>
<dbReference type="HOGENOM" id="CLU_076902_2_2_1"/>
<dbReference type="InParanoid" id="Q18786"/>
<dbReference type="OMA" id="DVKEMWT"/>
<dbReference type="OrthoDB" id="437526at2759"/>
<dbReference type="PhylomeDB" id="Q18786"/>
<dbReference type="Reactome" id="R-CEL-191859">
    <property type="pathway name" value="snRNP Assembly"/>
</dbReference>
<dbReference type="Reactome" id="R-CEL-72163">
    <property type="pathway name" value="mRNA Splicing - Major Pathway"/>
</dbReference>
<dbReference type="Reactome" id="R-CEL-72165">
    <property type="pathway name" value="mRNA Splicing - Minor Pathway"/>
</dbReference>
<dbReference type="PRO" id="PR:Q18786"/>
<dbReference type="Proteomes" id="UP000001940">
    <property type="component" value="Chromosome V"/>
</dbReference>
<dbReference type="Bgee" id="WBGene00004917">
    <property type="expression patterns" value="Expressed in embryo and 4 other cell types or tissues"/>
</dbReference>
<dbReference type="GO" id="GO:0071013">
    <property type="term" value="C:catalytic step 2 spliceosome"/>
    <property type="evidence" value="ECO:0000318"/>
    <property type="project" value="GO_Central"/>
</dbReference>
<dbReference type="GO" id="GO:0005829">
    <property type="term" value="C:cytosol"/>
    <property type="evidence" value="ECO:0007669"/>
    <property type="project" value="UniProtKB-SubCell"/>
</dbReference>
<dbReference type="GO" id="GO:0034715">
    <property type="term" value="C:pICln-Sm protein complex"/>
    <property type="evidence" value="ECO:0000318"/>
    <property type="project" value="GO_Central"/>
</dbReference>
<dbReference type="GO" id="GO:0071011">
    <property type="term" value="C:precatalytic spliceosome"/>
    <property type="evidence" value="ECO:0000318"/>
    <property type="project" value="GO_Central"/>
</dbReference>
<dbReference type="GO" id="GO:0005685">
    <property type="term" value="C:U1 snRNP"/>
    <property type="evidence" value="ECO:0000318"/>
    <property type="project" value="GO_Central"/>
</dbReference>
<dbReference type="GO" id="GO:0005686">
    <property type="term" value="C:U2 snRNP"/>
    <property type="evidence" value="ECO:0000318"/>
    <property type="project" value="GO_Central"/>
</dbReference>
<dbReference type="GO" id="GO:0046540">
    <property type="term" value="C:U4/U6 x U5 tri-snRNP complex"/>
    <property type="evidence" value="ECO:0000318"/>
    <property type="project" value="GO_Central"/>
</dbReference>
<dbReference type="GO" id="GO:0005682">
    <property type="term" value="C:U5 snRNP"/>
    <property type="evidence" value="ECO:0000318"/>
    <property type="project" value="GO_Central"/>
</dbReference>
<dbReference type="GO" id="GO:0003723">
    <property type="term" value="F:RNA binding"/>
    <property type="evidence" value="ECO:0007669"/>
    <property type="project" value="InterPro"/>
</dbReference>
<dbReference type="GO" id="GO:0000387">
    <property type="term" value="P:spliceosomal snRNP assembly"/>
    <property type="evidence" value="ECO:0000318"/>
    <property type="project" value="GO_Central"/>
</dbReference>
<dbReference type="CDD" id="cd01720">
    <property type="entry name" value="Sm_D2"/>
    <property type="match status" value="1"/>
</dbReference>
<dbReference type="FunFam" id="2.30.30.100:FF:000069">
    <property type="entry name" value="Small nuclear ribonucleoprotein Sm D2"/>
    <property type="match status" value="1"/>
</dbReference>
<dbReference type="Gene3D" id="2.30.30.100">
    <property type="match status" value="1"/>
</dbReference>
<dbReference type="InterPro" id="IPR010920">
    <property type="entry name" value="LSM_dom_sf"/>
</dbReference>
<dbReference type="InterPro" id="IPR047575">
    <property type="entry name" value="Sm"/>
</dbReference>
<dbReference type="InterPro" id="IPR027248">
    <property type="entry name" value="Sm_D2"/>
</dbReference>
<dbReference type="InterPro" id="IPR001163">
    <property type="entry name" value="Sm_dom_euk/arc"/>
</dbReference>
<dbReference type="PANTHER" id="PTHR12777">
    <property type="entry name" value="SMALL NUCLEAR RIBONUCLEOPROTEIN SM D2"/>
    <property type="match status" value="1"/>
</dbReference>
<dbReference type="Pfam" id="PF01423">
    <property type="entry name" value="LSM"/>
    <property type="match status" value="1"/>
</dbReference>
<dbReference type="SMART" id="SM00651">
    <property type="entry name" value="Sm"/>
    <property type="match status" value="1"/>
</dbReference>
<dbReference type="SUPFAM" id="SSF50182">
    <property type="entry name" value="Sm-like ribonucleoproteins"/>
    <property type="match status" value="1"/>
</dbReference>
<dbReference type="PROSITE" id="PS52002">
    <property type="entry name" value="SM"/>
    <property type="match status" value="1"/>
</dbReference>
<gene>
    <name type="primary">snr-4</name>
    <name type="ORF">C52E4.3</name>
</gene>
<sequence length="118" mass="13267">MSAQAKPRSEMTAEELAAKEDEEFNVGPLSILTNSVKNNHQVLINCRNNKKLLGRVKAFDRHCNMVLENVKEMWTEVPKTGKGKKKAKSVAKDRFISKMFLRGDSVILVVKNPLAQAE</sequence>
<accession>Q18786</accession>
<feature type="chain" id="PRO_0000122210" description="Probable small nuclear ribonucleoprotein Sm D2">
    <location>
        <begin position="1"/>
        <end position="118"/>
    </location>
</feature>
<feature type="domain" description="Sm" evidence="2">
    <location>
        <begin position="29"/>
        <end position="115"/>
    </location>
</feature>
<name>SMD2_CAEEL</name>
<protein>
    <recommendedName>
        <fullName>Probable small nuclear ribonucleoprotein Sm D2</fullName>
        <shortName>Sm-D2</shortName>
    </recommendedName>
    <alternativeName>
        <fullName>snRNP core protein D2</fullName>
    </alternativeName>
</protein>
<proteinExistence type="evidence at protein level"/>
<keyword id="KW-0002">3D-structure</keyword>
<keyword id="KW-0963">Cytoplasm</keyword>
<keyword id="KW-0507">mRNA processing</keyword>
<keyword id="KW-0508">mRNA splicing</keyword>
<keyword id="KW-0539">Nucleus</keyword>
<keyword id="KW-1185">Reference proteome</keyword>
<keyword id="KW-0687">Ribonucleoprotein</keyword>
<keyword id="KW-0747">Spliceosome</keyword>
<comment type="function">
    <text evidence="1">Plays a role in pre-mRNA splicing as a core component of the spliceosomal U1, U2, U4 and U5 small nuclear ribonucleoproteins (snRNPs), the building blocks of the spliceosome.</text>
</comment>
<comment type="interaction">
    <interactant intactId="EBI-327286">
        <id>Q18786</id>
    </interactant>
    <interactant intactId="EBI-328740">
        <id>P34659</id>
        <label>snr-5</label>
    </interactant>
    <organismsDiffer>false</organismsDiffer>
    <experiments>4</experiments>
</comment>
<comment type="subcellular location">
    <subcellularLocation>
        <location evidence="1">Nucleus</location>
    </subcellularLocation>
    <subcellularLocation>
        <location evidence="1">Cytoplasm</location>
        <location evidence="1">Cytosol</location>
    </subcellularLocation>
</comment>
<comment type="similarity">
    <text evidence="3">Belongs to the snRNP core protein family.</text>
</comment>
<organism>
    <name type="scientific">Caenorhabditis elegans</name>
    <dbReference type="NCBI Taxonomy" id="6239"/>
    <lineage>
        <taxon>Eukaryota</taxon>
        <taxon>Metazoa</taxon>
        <taxon>Ecdysozoa</taxon>
        <taxon>Nematoda</taxon>
        <taxon>Chromadorea</taxon>
        <taxon>Rhabditida</taxon>
        <taxon>Rhabditina</taxon>
        <taxon>Rhabditomorpha</taxon>
        <taxon>Rhabditoidea</taxon>
        <taxon>Rhabditidae</taxon>
        <taxon>Peloderinae</taxon>
        <taxon>Caenorhabditis</taxon>
    </lineage>
</organism>